<evidence type="ECO:0000256" key="1">
    <source>
        <dbReference type="SAM" id="MobiDB-lite"/>
    </source>
</evidence>
<protein>
    <recommendedName>
        <fullName>Putative uncharacterized protein DDB_G0279765</fullName>
    </recommendedName>
</protein>
<accession>Q54WB8</accession>
<sequence length="815" mass="91542">MSSSTISAMLMGAADGDLNYLNSTPIGSSLLDDMGLDEDDFQSSSFEVFIPESYDSKFMSDYEYISKNANRFMKCKSREYAIQGELLKFFIIVRPPDDSKKRQKQQQIQQLLQQKQKQILINQSNTSTPPPPQKSIITNSDSPRLIVSDTTSTTKIEEQQPPPPPPQEEQQEQDSITVLQPSTSSSSNLLFELQLRLASDYEKSTKENQNPLNIIDYNPKHSFVNTEMKNDHISSSKSATSYLRQNTLNVNNNKNNKNQNNNNNNNIENSNNTNSRFIGDVVEVSSPFTFKDTSNPYQKPNFFRLSNGDLVFPIEVPIYIREINEDKLITMVIKINRPKNNRNNIASSDNKLERLIQGGAVDKSVNYTMRTSTASLGVGGTIHNNKVTRTILKNFTLIQPMKVLLQSNTTIGCKNLICVSLENTHPTSNITIKSLDIYLFHVLNMESTTIIDSVSSVSSIPTHRQIGNLVKVNEHYVISNLSNHRLPIELEPSNQYSMVLSVEPSSIQKTLQPTEGFHTKVELSWHIPCSSGQVLSLYELRAQNPPFTTNLMISTDYKSPVILNEKFLVKFNISNLSNSLKNLTINIPPSIIKQNGSSSSNNNSKLSSTNSGQTSDNPINSSNGGQSIKKQGSNLSLNRQQSSTKLNNQSNNNNNNNANTTNQNNLNSSRYIPVETTIQFSELSNKSLLSYEEIQRNSVNLLCLEKSVHIGPVNSKNSISASIEFLPLSVGIFEIQNITLYDSIEQITYSLKEPLQICCVSREHNNEEHNNNNKENNNENNKENINNNNNIINNNNDNNCNENNNNCNENNEEIK</sequence>
<gene>
    <name type="ORF">DDB_G0279765</name>
</gene>
<feature type="chain" id="PRO_0000352441" description="Putative uncharacterized protein DDB_G0279765">
    <location>
        <begin position="1"/>
        <end position="815"/>
    </location>
</feature>
<feature type="region of interest" description="Disordered" evidence="1">
    <location>
        <begin position="123"/>
        <end position="183"/>
    </location>
</feature>
<feature type="region of interest" description="Disordered" evidence="1">
    <location>
        <begin position="249"/>
        <end position="274"/>
    </location>
</feature>
<feature type="region of interest" description="Disordered" evidence="1">
    <location>
        <begin position="592"/>
        <end position="668"/>
    </location>
</feature>
<feature type="region of interest" description="Disordered" evidence="1">
    <location>
        <begin position="765"/>
        <end position="815"/>
    </location>
</feature>
<feature type="compositionally biased region" description="Polar residues" evidence="1">
    <location>
        <begin position="135"/>
        <end position="154"/>
    </location>
</feature>
<feature type="compositionally biased region" description="Polar residues" evidence="1">
    <location>
        <begin position="174"/>
        <end position="183"/>
    </location>
</feature>
<feature type="compositionally biased region" description="Low complexity" evidence="1">
    <location>
        <begin position="595"/>
        <end position="611"/>
    </location>
</feature>
<feature type="compositionally biased region" description="Polar residues" evidence="1">
    <location>
        <begin position="612"/>
        <end position="639"/>
    </location>
</feature>
<feature type="compositionally biased region" description="Low complexity" evidence="1">
    <location>
        <begin position="640"/>
        <end position="668"/>
    </location>
</feature>
<feature type="compositionally biased region" description="Basic and acidic residues" evidence="1">
    <location>
        <begin position="765"/>
        <end position="782"/>
    </location>
</feature>
<feature type="compositionally biased region" description="Low complexity" evidence="1">
    <location>
        <begin position="783"/>
        <end position="809"/>
    </location>
</feature>
<keyword id="KW-1185">Reference proteome</keyword>
<name>Y6021_DICDI</name>
<organism>
    <name type="scientific">Dictyostelium discoideum</name>
    <name type="common">Social amoeba</name>
    <dbReference type="NCBI Taxonomy" id="44689"/>
    <lineage>
        <taxon>Eukaryota</taxon>
        <taxon>Amoebozoa</taxon>
        <taxon>Evosea</taxon>
        <taxon>Eumycetozoa</taxon>
        <taxon>Dictyostelia</taxon>
        <taxon>Dictyosteliales</taxon>
        <taxon>Dictyosteliaceae</taxon>
        <taxon>Dictyostelium</taxon>
    </lineage>
</organism>
<dbReference type="EMBL" id="AAFI02000032">
    <property type="protein sequence ID" value="EAL67562.1"/>
    <property type="molecule type" value="Genomic_DNA"/>
</dbReference>
<dbReference type="RefSeq" id="XP_641540.1">
    <property type="nucleotide sequence ID" value="XM_636448.1"/>
</dbReference>
<dbReference type="FunCoup" id="Q54WB8">
    <property type="interactions" value="25"/>
</dbReference>
<dbReference type="STRING" id="44689.Q54WB8"/>
<dbReference type="PaxDb" id="44689-DDB0206021"/>
<dbReference type="EnsemblProtists" id="EAL67562">
    <property type="protein sequence ID" value="EAL67562"/>
    <property type="gene ID" value="DDB_G0279765"/>
</dbReference>
<dbReference type="GeneID" id="8622213"/>
<dbReference type="KEGG" id="ddi:DDB_G0279765"/>
<dbReference type="dictyBase" id="DDB_G0279765"/>
<dbReference type="VEuPathDB" id="AmoebaDB:DDB_G0279765"/>
<dbReference type="eggNOG" id="KOG0156">
    <property type="taxonomic scope" value="Eukaryota"/>
</dbReference>
<dbReference type="HOGENOM" id="CLU_346635_0_0_1"/>
<dbReference type="InParanoid" id="Q54WB8"/>
<dbReference type="OMA" id="NANTHRF"/>
<dbReference type="PRO" id="PR:Q54WB8"/>
<dbReference type="Proteomes" id="UP000002195">
    <property type="component" value="Chromosome 3"/>
</dbReference>
<dbReference type="GO" id="GO:0005737">
    <property type="term" value="C:cytoplasm"/>
    <property type="evidence" value="ECO:0000318"/>
    <property type="project" value="GO_Central"/>
</dbReference>
<dbReference type="GO" id="GO:0005643">
    <property type="term" value="C:nuclear pore"/>
    <property type="evidence" value="ECO:0000318"/>
    <property type="project" value="GO_Central"/>
</dbReference>
<reference key="1">
    <citation type="journal article" date="2005" name="Nature">
        <title>The genome of the social amoeba Dictyostelium discoideum.</title>
        <authorList>
            <person name="Eichinger L."/>
            <person name="Pachebat J.A."/>
            <person name="Gloeckner G."/>
            <person name="Rajandream M.A."/>
            <person name="Sucgang R."/>
            <person name="Berriman M."/>
            <person name="Song J."/>
            <person name="Olsen R."/>
            <person name="Szafranski K."/>
            <person name="Xu Q."/>
            <person name="Tunggal B."/>
            <person name="Kummerfeld S."/>
            <person name="Madera M."/>
            <person name="Konfortov B.A."/>
            <person name="Rivero F."/>
            <person name="Bankier A.T."/>
            <person name="Lehmann R."/>
            <person name="Hamlin N."/>
            <person name="Davies R."/>
            <person name="Gaudet P."/>
            <person name="Fey P."/>
            <person name="Pilcher K."/>
            <person name="Chen G."/>
            <person name="Saunders D."/>
            <person name="Sodergren E.J."/>
            <person name="Davis P."/>
            <person name="Kerhornou A."/>
            <person name="Nie X."/>
            <person name="Hall N."/>
            <person name="Anjard C."/>
            <person name="Hemphill L."/>
            <person name="Bason N."/>
            <person name="Farbrother P."/>
            <person name="Desany B."/>
            <person name="Just E."/>
            <person name="Morio T."/>
            <person name="Rost R."/>
            <person name="Churcher C.M."/>
            <person name="Cooper J."/>
            <person name="Haydock S."/>
            <person name="van Driessche N."/>
            <person name="Cronin A."/>
            <person name="Goodhead I."/>
            <person name="Muzny D.M."/>
            <person name="Mourier T."/>
            <person name="Pain A."/>
            <person name="Lu M."/>
            <person name="Harper D."/>
            <person name="Lindsay R."/>
            <person name="Hauser H."/>
            <person name="James K.D."/>
            <person name="Quiles M."/>
            <person name="Madan Babu M."/>
            <person name="Saito T."/>
            <person name="Buchrieser C."/>
            <person name="Wardroper A."/>
            <person name="Felder M."/>
            <person name="Thangavelu M."/>
            <person name="Johnson D."/>
            <person name="Knights A."/>
            <person name="Loulseged H."/>
            <person name="Mungall K.L."/>
            <person name="Oliver K."/>
            <person name="Price C."/>
            <person name="Quail M.A."/>
            <person name="Urushihara H."/>
            <person name="Hernandez J."/>
            <person name="Rabbinowitsch E."/>
            <person name="Steffen D."/>
            <person name="Sanders M."/>
            <person name="Ma J."/>
            <person name="Kohara Y."/>
            <person name="Sharp S."/>
            <person name="Simmonds M.N."/>
            <person name="Spiegler S."/>
            <person name="Tivey A."/>
            <person name="Sugano S."/>
            <person name="White B."/>
            <person name="Walker D."/>
            <person name="Woodward J.R."/>
            <person name="Winckler T."/>
            <person name="Tanaka Y."/>
            <person name="Shaulsky G."/>
            <person name="Schleicher M."/>
            <person name="Weinstock G.M."/>
            <person name="Rosenthal A."/>
            <person name="Cox E.C."/>
            <person name="Chisholm R.L."/>
            <person name="Gibbs R.A."/>
            <person name="Loomis W.F."/>
            <person name="Platzer M."/>
            <person name="Kay R.R."/>
            <person name="Williams J.G."/>
            <person name="Dear P.H."/>
            <person name="Noegel A.A."/>
            <person name="Barrell B.G."/>
            <person name="Kuspa A."/>
        </authorList>
    </citation>
    <scope>NUCLEOTIDE SEQUENCE [LARGE SCALE GENOMIC DNA]</scope>
    <source>
        <strain>AX4</strain>
    </source>
</reference>
<proteinExistence type="predicted"/>